<sequence>MFLLYEYDFFWAFLIISILVPILAFFISGVLAPISKGPEKLSTYESGIEPMGDAWLQFRIRYYMFALVFVVFDVETVFLYPWAMSFDVLGVSVFIEAFIFVLILIIGLVYAWRKGALEWS</sequence>
<geneLocation type="chloroplast"/>
<comment type="function">
    <text evidence="1">NDH shuttles electrons from NAD(P)H:plastoquinone, via FMN and iron-sulfur (Fe-S) centers, to quinones in the photosynthetic chain and possibly in a chloroplast respiratory chain. The immediate electron acceptor for the enzyme in this species is believed to be plastoquinone. Couples the redox reaction to proton translocation, and thus conserves the redox energy in a proton gradient.</text>
</comment>
<comment type="catalytic activity">
    <reaction evidence="1">
        <text>a plastoquinone + NADH + (n+1) H(+)(in) = a plastoquinol + NAD(+) + n H(+)(out)</text>
        <dbReference type="Rhea" id="RHEA:42608"/>
        <dbReference type="Rhea" id="RHEA-COMP:9561"/>
        <dbReference type="Rhea" id="RHEA-COMP:9562"/>
        <dbReference type="ChEBI" id="CHEBI:15378"/>
        <dbReference type="ChEBI" id="CHEBI:17757"/>
        <dbReference type="ChEBI" id="CHEBI:57540"/>
        <dbReference type="ChEBI" id="CHEBI:57945"/>
        <dbReference type="ChEBI" id="CHEBI:62192"/>
    </reaction>
</comment>
<comment type="catalytic activity">
    <reaction evidence="1">
        <text>a plastoquinone + NADPH + (n+1) H(+)(in) = a plastoquinol + NADP(+) + n H(+)(out)</text>
        <dbReference type="Rhea" id="RHEA:42612"/>
        <dbReference type="Rhea" id="RHEA-COMP:9561"/>
        <dbReference type="Rhea" id="RHEA-COMP:9562"/>
        <dbReference type="ChEBI" id="CHEBI:15378"/>
        <dbReference type="ChEBI" id="CHEBI:17757"/>
        <dbReference type="ChEBI" id="CHEBI:57783"/>
        <dbReference type="ChEBI" id="CHEBI:58349"/>
        <dbReference type="ChEBI" id="CHEBI:62192"/>
    </reaction>
</comment>
<comment type="subunit">
    <text evidence="1">NDH is composed of at least 16 different subunits, 5 of which are encoded in the nucleus.</text>
</comment>
<comment type="subcellular location">
    <subcellularLocation>
        <location evidence="1">Plastid</location>
        <location evidence="1">Chloroplast thylakoid membrane</location>
        <topology evidence="1">Multi-pass membrane protein</topology>
    </subcellularLocation>
</comment>
<comment type="similarity">
    <text evidence="1">Belongs to the complex I subunit 3 family.</text>
</comment>
<organism>
    <name type="scientific">Atropa belladonna</name>
    <name type="common">Belladonna</name>
    <name type="synonym">Deadly nightshade</name>
    <dbReference type="NCBI Taxonomy" id="33113"/>
    <lineage>
        <taxon>Eukaryota</taxon>
        <taxon>Viridiplantae</taxon>
        <taxon>Streptophyta</taxon>
        <taxon>Embryophyta</taxon>
        <taxon>Tracheophyta</taxon>
        <taxon>Spermatophyta</taxon>
        <taxon>Magnoliopsida</taxon>
        <taxon>eudicotyledons</taxon>
        <taxon>Gunneridae</taxon>
        <taxon>Pentapetalae</taxon>
        <taxon>asterids</taxon>
        <taxon>lamiids</taxon>
        <taxon>Solanales</taxon>
        <taxon>Solanaceae</taxon>
        <taxon>Solanoideae</taxon>
        <taxon>Hyoscyameae</taxon>
        <taxon>Atropa</taxon>
    </lineage>
</organism>
<reference key="1">
    <citation type="journal article" date="2002" name="Mol. Biol. Evol.">
        <title>The plastid chromosome of Atropa belladonna and its comparison with that of Nicotiana tabacum: the role of RNA editing in generating divergence in the process of plant speciation.</title>
        <authorList>
            <person name="Schmitz-Linneweber C."/>
            <person name="Regel R."/>
            <person name="Du T.G."/>
            <person name="Hupfer H."/>
            <person name="Herrmann R.G."/>
            <person name="Maier R.M."/>
        </authorList>
    </citation>
    <scope>NUCLEOTIDE SEQUENCE [LARGE SCALE GENOMIC DNA]</scope>
    <source>
        <strain>cv. Ab5p(kan)</strain>
    </source>
</reference>
<accession>Q8S8X0</accession>
<feature type="chain" id="PRO_0000362809" description="NAD(P)H-quinone oxidoreductase subunit 3, chloroplastic">
    <location>
        <begin position="1"/>
        <end position="120"/>
    </location>
</feature>
<feature type="transmembrane region" description="Helical" evidence="1">
    <location>
        <begin position="9"/>
        <end position="29"/>
    </location>
</feature>
<feature type="transmembrane region" description="Helical" evidence="1">
    <location>
        <begin position="64"/>
        <end position="84"/>
    </location>
</feature>
<feature type="transmembrane region" description="Helical" evidence="1">
    <location>
        <begin position="88"/>
        <end position="108"/>
    </location>
</feature>
<proteinExistence type="inferred from homology"/>
<protein>
    <recommendedName>
        <fullName evidence="1">NAD(P)H-quinone oxidoreductase subunit 3, chloroplastic</fullName>
        <ecNumber evidence="1">7.1.1.-</ecNumber>
    </recommendedName>
    <alternativeName>
        <fullName evidence="1">NAD(P)H dehydrogenase subunit 3</fullName>
    </alternativeName>
    <alternativeName>
        <fullName evidence="1">NADH-plastoquinone oxidoreductase subunit 3</fullName>
    </alternativeName>
</protein>
<gene>
    <name evidence="1" type="primary">ndhC</name>
</gene>
<name>NU3C_ATRBE</name>
<dbReference type="EC" id="7.1.1.-" evidence="1"/>
<dbReference type="EMBL" id="AJ316582">
    <property type="protein sequence ID" value="CAC88049.1"/>
    <property type="molecule type" value="Genomic_DNA"/>
</dbReference>
<dbReference type="RefSeq" id="NP_783237.1">
    <property type="nucleotide sequence ID" value="NC_004561.1"/>
</dbReference>
<dbReference type="SMR" id="Q8S8X0"/>
<dbReference type="GeneID" id="806489"/>
<dbReference type="GO" id="GO:0009535">
    <property type="term" value="C:chloroplast thylakoid membrane"/>
    <property type="evidence" value="ECO:0007669"/>
    <property type="project" value="UniProtKB-SubCell"/>
</dbReference>
<dbReference type="GO" id="GO:0030964">
    <property type="term" value="C:NADH dehydrogenase complex"/>
    <property type="evidence" value="ECO:0007669"/>
    <property type="project" value="TreeGrafter"/>
</dbReference>
<dbReference type="GO" id="GO:0008137">
    <property type="term" value="F:NADH dehydrogenase (ubiquinone) activity"/>
    <property type="evidence" value="ECO:0007669"/>
    <property type="project" value="InterPro"/>
</dbReference>
<dbReference type="GO" id="GO:0048038">
    <property type="term" value="F:quinone binding"/>
    <property type="evidence" value="ECO:0007669"/>
    <property type="project" value="UniProtKB-KW"/>
</dbReference>
<dbReference type="GO" id="GO:0019684">
    <property type="term" value="P:photosynthesis, light reaction"/>
    <property type="evidence" value="ECO:0007669"/>
    <property type="project" value="UniProtKB-UniRule"/>
</dbReference>
<dbReference type="FunFam" id="1.20.58.1610:FF:000001">
    <property type="entry name" value="NAD(P)H-quinone oxidoreductase subunit 3, chloroplastic"/>
    <property type="match status" value="1"/>
</dbReference>
<dbReference type="Gene3D" id="1.20.58.1610">
    <property type="entry name" value="NADH:ubiquinone/plastoquinone oxidoreductase, chain 3"/>
    <property type="match status" value="1"/>
</dbReference>
<dbReference type="HAMAP" id="MF_01394">
    <property type="entry name" value="NDH1_NuoA"/>
    <property type="match status" value="1"/>
</dbReference>
<dbReference type="InterPro" id="IPR023043">
    <property type="entry name" value="NAD(P)H_OxRDtase_bac/plastid"/>
</dbReference>
<dbReference type="InterPro" id="IPR000440">
    <property type="entry name" value="NADH_UbQ/plastoQ_OxRdtase_su3"/>
</dbReference>
<dbReference type="InterPro" id="IPR038430">
    <property type="entry name" value="NDAH_ubi_oxred_su3_sf"/>
</dbReference>
<dbReference type="PANTHER" id="PTHR11058">
    <property type="entry name" value="NADH-UBIQUINONE OXIDOREDUCTASE CHAIN 3"/>
    <property type="match status" value="1"/>
</dbReference>
<dbReference type="PANTHER" id="PTHR11058:SF9">
    <property type="entry name" value="NADH-UBIQUINONE OXIDOREDUCTASE CHAIN 3"/>
    <property type="match status" value="1"/>
</dbReference>
<dbReference type="Pfam" id="PF00507">
    <property type="entry name" value="Oxidored_q4"/>
    <property type="match status" value="1"/>
</dbReference>
<keyword id="KW-0150">Chloroplast</keyword>
<keyword id="KW-0472">Membrane</keyword>
<keyword id="KW-0520">NAD</keyword>
<keyword id="KW-0521">NADP</keyword>
<keyword id="KW-0934">Plastid</keyword>
<keyword id="KW-0618">Plastoquinone</keyword>
<keyword id="KW-0874">Quinone</keyword>
<keyword id="KW-0793">Thylakoid</keyword>
<keyword id="KW-1278">Translocase</keyword>
<keyword id="KW-0812">Transmembrane</keyword>
<keyword id="KW-1133">Transmembrane helix</keyword>
<keyword id="KW-0813">Transport</keyword>
<evidence type="ECO:0000255" key="1">
    <source>
        <dbReference type="HAMAP-Rule" id="MF_01394"/>
    </source>
</evidence>